<name>PLRKT_MOUSE</name>
<organism>
    <name type="scientific">Mus musculus</name>
    <name type="common">Mouse</name>
    <dbReference type="NCBI Taxonomy" id="10090"/>
    <lineage>
        <taxon>Eukaryota</taxon>
        <taxon>Metazoa</taxon>
        <taxon>Chordata</taxon>
        <taxon>Craniata</taxon>
        <taxon>Vertebrata</taxon>
        <taxon>Euteleostomi</taxon>
        <taxon>Mammalia</taxon>
        <taxon>Eutheria</taxon>
        <taxon>Euarchontoglires</taxon>
        <taxon>Glires</taxon>
        <taxon>Rodentia</taxon>
        <taxon>Myomorpha</taxon>
        <taxon>Muroidea</taxon>
        <taxon>Muridae</taxon>
        <taxon>Murinae</taxon>
        <taxon>Mus</taxon>
        <taxon>Mus</taxon>
    </lineage>
</organism>
<protein>
    <recommendedName>
        <fullName>Plasminogen receptor (KT)</fullName>
        <shortName>Plg-R(KT)</shortName>
    </recommendedName>
</protein>
<keyword id="KW-1003">Cell membrane</keyword>
<keyword id="KW-0145">Chemotaxis</keyword>
<keyword id="KW-0395">Inflammatory response</keyword>
<keyword id="KW-0472">Membrane</keyword>
<keyword id="KW-0617">Plasminogen activation</keyword>
<keyword id="KW-1185">Reference proteome</keyword>
<keyword id="KW-0812">Transmembrane</keyword>
<keyword id="KW-1133">Transmembrane helix</keyword>
<feature type="chain" id="PRO_0000089696" description="Plasminogen receptor (KT)">
    <location>
        <begin position="1"/>
        <end position="147"/>
    </location>
</feature>
<feature type="topological domain" description="Extracellular" evidence="2">
    <location>
        <begin position="1"/>
        <end position="52"/>
    </location>
</feature>
<feature type="transmembrane region" description="Helical" evidence="2">
    <location>
        <begin position="53"/>
        <end position="73"/>
    </location>
</feature>
<feature type="topological domain" description="Cytoplasmic" evidence="2">
    <location>
        <begin position="74"/>
        <end position="78"/>
    </location>
</feature>
<feature type="transmembrane region" description="Helical" evidence="2">
    <location>
        <begin position="79"/>
        <end position="99"/>
    </location>
</feature>
<feature type="topological domain" description="Extracellular" evidence="2">
    <location>
        <begin position="100"/>
        <end position="147"/>
    </location>
</feature>
<feature type="mutagenesis site" description="Disrupts binding to plasminogen." evidence="3">
    <original>K</original>
    <variation>A</variation>
    <location>
        <position position="147"/>
    </location>
</feature>
<comment type="function">
    <text evidence="3 4 5">Receptor for plasminogen. Regulates urokinase plasminogen activator-dependent and stimulates tissue-type plasminogen activator-dependent cell surface plasminogen activation. Proposed to be part of a local catecholaminergic cell plasminogen activation system that regulates neuroendocrine prohormone processing. Involved in regulation of inflammatory response; regulates monocyte chemotactic migration and matrix metalloproteinase activation, such as of MMP2 and MMP9.</text>
</comment>
<comment type="subunit">
    <text evidence="1">Interacts with PLAT. Interacts with PLAUR (By similarity).</text>
</comment>
<comment type="subcellular location">
    <subcellularLocation>
        <location evidence="3 4">Cell membrane</location>
        <topology evidence="3 4">Multi-pass membrane protein</topology>
    </subcellularLocation>
    <text>Colocalizes on the cell surface with urokinase plasminogen activator surface receptor/Plaur.</text>
</comment>
<comment type="tissue specificity">
    <text evidence="4">Expressed in monocytes; detected in differentiated monocytes but not in progenitor cells. Expressed in adrenal medulla and hippocampus.</text>
</comment>
<evidence type="ECO:0000250" key="1"/>
<evidence type="ECO:0000255" key="2"/>
<evidence type="ECO:0000269" key="3">
    <source>
    </source>
</evidence>
<evidence type="ECO:0000269" key="4">
    <source>
    </source>
</evidence>
<evidence type="ECO:0000269" key="5">
    <source>
    </source>
</evidence>
<sequence>MGFIFSKSMNENMKNQQEFMVTHARLQLERHLTMQNEMRERQMAMQIAWSREFLKYFGTFFGIATISLATGALKRKKPAFLVPIVPLSFIFTYQYDLGYGTLLQRMKSEAEDILETEKTKLELPKGLITFESLEKARREQSKLFSDK</sequence>
<accession>Q9D3P8</accession>
<accession>Q3TCJ3</accession>
<dbReference type="EMBL" id="AK017215">
    <property type="protein sequence ID" value="BAB30638.1"/>
    <property type="molecule type" value="mRNA"/>
</dbReference>
<dbReference type="EMBL" id="AK168454">
    <property type="protein sequence ID" value="BAE40355.1"/>
    <property type="molecule type" value="mRNA"/>
</dbReference>
<dbReference type="EMBL" id="AK170700">
    <property type="protein sequence ID" value="BAE41963.1"/>
    <property type="molecule type" value="mRNA"/>
</dbReference>
<dbReference type="EMBL" id="BC024953">
    <property type="protein sequence ID" value="AAH24953.1"/>
    <property type="molecule type" value="mRNA"/>
</dbReference>
<dbReference type="CCDS" id="CCDS29734.1"/>
<dbReference type="RefSeq" id="NP_080638.1">
    <property type="nucleotide sequence ID" value="NM_026362.2"/>
</dbReference>
<dbReference type="RefSeq" id="XP_011245627.1">
    <property type="nucleotide sequence ID" value="XM_011247325.2"/>
</dbReference>
<dbReference type="RefSeq" id="XP_011245628.1">
    <property type="nucleotide sequence ID" value="XM_011247326.2"/>
</dbReference>
<dbReference type="RefSeq" id="XP_017173772.1">
    <property type="nucleotide sequence ID" value="XM_017318283.1"/>
</dbReference>
<dbReference type="RefSeq" id="XP_017173773.1">
    <property type="nucleotide sequence ID" value="XM_017318284.1"/>
</dbReference>
<dbReference type="RefSeq" id="XP_017173774.1">
    <property type="nucleotide sequence ID" value="XM_017318285.1"/>
</dbReference>
<dbReference type="RefSeq" id="XP_017173775.1">
    <property type="nucleotide sequence ID" value="XM_017318286.1"/>
</dbReference>
<dbReference type="RefSeq" id="XP_017173776.1">
    <property type="nucleotide sequence ID" value="XM_017318287.1"/>
</dbReference>
<dbReference type="RefSeq" id="XP_030106918.1">
    <property type="nucleotide sequence ID" value="XM_030251058.2"/>
</dbReference>
<dbReference type="RefSeq" id="XP_030106919.1">
    <property type="nucleotide sequence ID" value="XM_030251059.2"/>
</dbReference>
<dbReference type="RefSeq" id="XP_030106920.1">
    <property type="nucleotide sequence ID" value="XM_030251060.2"/>
</dbReference>
<dbReference type="BioGRID" id="212423">
    <property type="interactions" value="3"/>
</dbReference>
<dbReference type="FunCoup" id="Q9D3P8">
    <property type="interactions" value="485"/>
</dbReference>
<dbReference type="IntAct" id="Q9D3P8">
    <property type="interactions" value="4"/>
</dbReference>
<dbReference type="STRING" id="10090.ENSMUSP00000120466"/>
<dbReference type="iPTMnet" id="Q9D3P8"/>
<dbReference type="PhosphoSitePlus" id="Q9D3P8"/>
<dbReference type="PaxDb" id="10090-ENSMUSP00000120466"/>
<dbReference type="PeptideAtlas" id="Q9D3P8"/>
<dbReference type="ProteomicsDB" id="289454"/>
<dbReference type="Pumba" id="Q9D3P8"/>
<dbReference type="Antibodypedia" id="2322">
    <property type="antibodies" value="106 antibodies from 23 providers"/>
</dbReference>
<dbReference type="DNASU" id="67759"/>
<dbReference type="Ensembl" id="ENSMUST00000016639.12">
    <property type="protein sequence ID" value="ENSMUSP00000016639.6"/>
    <property type="gene ID" value="ENSMUSG00000016495.13"/>
</dbReference>
<dbReference type="Ensembl" id="ENSMUST00000143467.8">
    <property type="protein sequence ID" value="ENSMUSP00000120466.2"/>
    <property type="gene ID" value="ENSMUSG00000016495.13"/>
</dbReference>
<dbReference type="GeneID" id="67759"/>
<dbReference type="KEGG" id="mmu:67759"/>
<dbReference type="UCSC" id="uc008hdf.1">
    <property type="organism name" value="mouse"/>
</dbReference>
<dbReference type="AGR" id="MGI:1915009"/>
<dbReference type="CTD" id="55848"/>
<dbReference type="MGI" id="MGI:1915009">
    <property type="gene designation" value="Plgrkt"/>
</dbReference>
<dbReference type="VEuPathDB" id="HostDB:ENSMUSG00000016495"/>
<dbReference type="eggNOG" id="KOG4544">
    <property type="taxonomic scope" value="Eukaryota"/>
</dbReference>
<dbReference type="GeneTree" id="ENSGT00390000000375"/>
<dbReference type="HOGENOM" id="CLU_115107_1_0_1"/>
<dbReference type="InParanoid" id="Q9D3P8"/>
<dbReference type="OMA" id="MGYYTDW"/>
<dbReference type="OrthoDB" id="10256697at2759"/>
<dbReference type="PhylomeDB" id="Q9D3P8"/>
<dbReference type="TreeFam" id="TF314698"/>
<dbReference type="BioGRID-ORCS" id="67759">
    <property type="hits" value="5 hits in 76 CRISPR screens"/>
</dbReference>
<dbReference type="ChiTaRS" id="Plgrkt">
    <property type="organism name" value="mouse"/>
</dbReference>
<dbReference type="PRO" id="PR:Q9D3P8"/>
<dbReference type="Proteomes" id="UP000000589">
    <property type="component" value="Chromosome 19"/>
</dbReference>
<dbReference type="RNAct" id="Q9D3P8">
    <property type="molecule type" value="protein"/>
</dbReference>
<dbReference type="Bgee" id="ENSMUSG00000016495">
    <property type="expression patterns" value="Expressed in thymus and 266 other cell types or tissues"/>
</dbReference>
<dbReference type="ExpressionAtlas" id="Q9D3P8">
    <property type="expression patterns" value="baseline and differential"/>
</dbReference>
<dbReference type="GO" id="GO:0005739">
    <property type="term" value="C:mitochondrion"/>
    <property type="evidence" value="ECO:0007005"/>
    <property type="project" value="MGI"/>
</dbReference>
<dbReference type="GO" id="GO:0005886">
    <property type="term" value="C:plasma membrane"/>
    <property type="evidence" value="ECO:0000314"/>
    <property type="project" value="MGI"/>
</dbReference>
<dbReference type="GO" id="GO:0006935">
    <property type="term" value="P:chemotaxis"/>
    <property type="evidence" value="ECO:0007669"/>
    <property type="project" value="UniProtKB-KW"/>
</dbReference>
<dbReference type="GO" id="GO:0006954">
    <property type="term" value="P:inflammatory response"/>
    <property type="evidence" value="ECO:0007669"/>
    <property type="project" value="UniProtKB-KW"/>
</dbReference>
<dbReference type="GO" id="GO:0010756">
    <property type="term" value="P:positive regulation of plasminogen activation"/>
    <property type="evidence" value="ECO:0000314"/>
    <property type="project" value="MGI"/>
</dbReference>
<dbReference type="InterPro" id="IPR019319">
    <property type="entry name" value="Plg-R(KT)"/>
</dbReference>
<dbReference type="PANTHER" id="PTHR13411">
    <property type="entry name" value="PLASMINOGEN RECEPTOR (KT)"/>
    <property type="match status" value="1"/>
</dbReference>
<dbReference type="PANTHER" id="PTHR13411:SF6">
    <property type="entry name" value="PLASMINOGEN RECEPTOR (KT)"/>
    <property type="match status" value="1"/>
</dbReference>
<dbReference type="Pfam" id="PF10166">
    <property type="entry name" value="DUF2368"/>
    <property type="match status" value="1"/>
</dbReference>
<gene>
    <name type="primary">Plgrkt</name>
</gene>
<proteinExistence type="evidence at protein level"/>
<reference key="1">
    <citation type="journal article" date="2005" name="Science">
        <title>The transcriptional landscape of the mammalian genome.</title>
        <authorList>
            <person name="Carninci P."/>
            <person name="Kasukawa T."/>
            <person name="Katayama S."/>
            <person name="Gough J."/>
            <person name="Frith M.C."/>
            <person name="Maeda N."/>
            <person name="Oyama R."/>
            <person name="Ravasi T."/>
            <person name="Lenhard B."/>
            <person name="Wells C."/>
            <person name="Kodzius R."/>
            <person name="Shimokawa K."/>
            <person name="Bajic V.B."/>
            <person name="Brenner S.E."/>
            <person name="Batalov S."/>
            <person name="Forrest A.R."/>
            <person name="Zavolan M."/>
            <person name="Davis M.J."/>
            <person name="Wilming L.G."/>
            <person name="Aidinis V."/>
            <person name="Allen J.E."/>
            <person name="Ambesi-Impiombato A."/>
            <person name="Apweiler R."/>
            <person name="Aturaliya R.N."/>
            <person name="Bailey T.L."/>
            <person name="Bansal M."/>
            <person name="Baxter L."/>
            <person name="Beisel K.W."/>
            <person name="Bersano T."/>
            <person name="Bono H."/>
            <person name="Chalk A.M."/>
            <person name="Chiu K.P."/>
            <person name="Choudhary V."/>
            <person name="Christoffels A."/>
            <person name="Clutterbuck D.R."/>
            <person name="Crowe M.L."/>
            <person name="Dalla E."/>
            <person name="Dalrymple B.P."/>
            <person name="de Bono B."/>
            <person name="Della Gatta G."/>
            <person name="di Bernardo D."/>
            <person name="Down T."/>
            <person name="Engstrom P."/>
            <person name="Fagiolini M."/>
            <person name="Faulkner G."/>
            <person name="Fletcher C.F."/>
            <person name="Fukushima T."/>
            <person name="Furuno M."/>
            <person name="Futaki S."/>
            <person name="Gariboldi M."/>
            <person name="Georgii-Hemming P."/>
            <person name="Gingeras T.R."/>
            <person name="Gojobori T."/>
            <person name="Green R.E."/>
            <person name="Gustincich S."/>
            <person name="Harbers M."/>
            <person name="Hayashi Y."/>
            <person name="Hensch T.K."/>
            <person name="Hirokawa N."/>
            <person name="Hill D."/>
            <person name="Huminiecki L."/>
            <person name="Iacono M."/>
            <person name="Ikeo K."/>
            <person name="Iwama A."/>
            <person name="Ishikawa T."/>
            <person name="Jakt M."/>
            <person name="Kanapin A."/>
            <person name="Katoh M."/>
            <person name="Kawasawa Y."/>
            <person name="Kelso J."/>
            <person name="Kitamura H."/>
            <person name="Kitano H."/>
            <person name="Kollias G."/>
            <person name="Krishnan S.P."/>
            <person name="Kruger A."/>
            <person name="Kummerfeld S.K."/>
            <person name="Kurochkin I.V."/>
            <person name="Lareau L.F."/>
            <person name="Lazarevic D."/>
            <person name="Lipovich L."/>
            <person name="Liu J."/>
            <person name="Liuni S."/>
            <person name="McWilliam S."/>
            <person name="Madan Babu M."/>
            <person name="Madera M."/>
            <person name="Marchionni L."/>
            <person name="Matsuda H."/>
            <person name="Matsuzawa S."/>
            <person name="Miki H."/>
            <person name="Mignone F."/>
            <person name="Miyake S."/>
            <person name="Morris K."/>
            <person name="Mottagui-Tabar S."/>
            <person name="Mulder N."/>
            <person name="Nakano N."/>
            <person name="Nakauchi H."/>
            <person name="Ng P."/>
            <person name="Nilsson R."/>
            <person name="Nishiguchi S."/>
            <person name="Nishikawa S."/>
            <person name="Nori F."/>
            <person name="Ohara O."/>
            <person name="Okazaki Y."/>
            <person name="Orlando V."/>
            <person name="Pang K.C."/>
            <person name="Pavan W.J."/>
            <person name="Pavesi G."/>
            <person name="Pesole G."/>
            <person name="Petrovsky N."/>
            <person name="Piazza S."/>
            <person name="Reed J."/>
            <person name="Reid J.F."/>
            <person name="Ring B.Z."/>
            <person name="Ringwald M."/>
            <person name="Rost B."/>
            <person name="Ruan Y."/>
            <person name="Salzberg S.L."/>
            <person name="Sandelin A."/>
            <person name="Schneider C."/>
            <person name="Schoenbach C."/>
            <person name="Sekiguchi K."/>
            <person name="Semple C.A."/>
            <person name="Seno S."/>
            <person name="Sessa L."/>
            <person name="Sheng Y."/>
            <person name="Shibata Y."/>
            <person name="Shimada H."/>
            <person name="Shimada K."/>
            <person name="Silva D."/>
            <person name="Sinclair B."/>
            <person name="Sperling S."/>
            <person name="Stupka E."/>
            <person name="Sugiura K."/>
            <person name="Sultana R."/>
            <person name="Takenaka Y."/>
            <person name="Taki K."/>
            <person name="Tammoja K."/>
            <person name="Tan S.L."/>
            <person name="Tang S."/>
            <person name="Taylor M.S."/>
            <person name="Tegner J."/>
            <person name="Teichmann S.A."/>
            <person name="Ueda H.R."/>
            <person name="van Nimwegen E."/>
            <person name="Verardo R."/>
            <person name="Wei C.L."/>
            <person name="Yagi K."/>
            <person name="Yamanishi H."/>
            <person name="Zabarovsky E."/>
            <person name="Zhu S."/>
            <person name="Zimmer A."/>
            <person name="Hide W."/>
            <person name="Bult C."/>
            <person name="Grimmond S.M."/>
            <person name="Teasdale R.D."/>
            <person name="Liu E.T."/>
            <person name="Brusic V."/>
            <person name="Quackenbush J."/>
            <person name="Wahlestedt C."/>
            <person name="Mattick J.S."/>
            <person name="Hume D.A."/>
            <person name="Kai C."/>
            <person name="Sasaki D."/>
            <person name="Tomaru Y."/>
            <person name="Fukuda S."/>
            <person name="Kanamori-Katayama M."/>
            <person name="Suzuki M."/>
            <person name="Aoki J."/>
            <person name="Arakawa T."/>
            <person name="Iida J."/>
            <person name="Imamura K."/>
            <person name="Itoh M."/>
            <person name="Kato T."/>
            <person name="Kawaji H."/>
            <person name="Kawagashira N."/>
            <person name="Kawashima T."/>
            <person name="Kojima M."/>
            <person name="Kondo S."/>
            <person name="Konno H."/>
            <person name="Nakano K."/>
            <person name="Ninomiya N."/>
            <person name="Nishio T."/>
            <person name="Okada M."/>
            <person name="Plessy C."/>
            <person name="Shibata K."/>
            <person name="Shiraki T."/>
            <person name="Suzuki S."/>
            <person name="Tagami M."/>
            <person name="Waki K."/>
            <person name="Watahiki A."/>
            <person name="Okamura-Oho Y."/>
            <person name="Suzuki H."/>
            <person name="Kawai J."/>
            <person name="Hayashizaki Y."/>
        </authorList>
    </citation>
    <scope>NUCLEOTIDE SEQUENCE [LARGE SCALE MRNA]</scope>
    <source>
        <strain>C57BL/6J</strain>
        <strain>NOD</strain>
        <tissue>Amnion</tissue>
        <tissue>Intestine</tissue>
    </source>
</reference>
<reference key="2">
    <citation type="journal article" date="2004" name="Genome Res.">
        <title>The status, quality, and expansion of the NIH full-length cDNA project: the Mammalian Gene Collection (MGC).</title>
        <authorList>
            <consortium name="The MGC Project Team"/>
        </authorList>
    </citation>
    <scope>NUCLEOTIDE SEQUENCE [LARGE SCALE MRNA]</scope>
    <source>
        <strain>FVB/N</strain>
        <tissue>Mammary tumor</tissue>
    </source>
</reference>
<reference key="3">
    <citation type="journal article" date="2010" name="Blood">
        <title>Proteomics-based discovery of a novel, structurally unique, and developmentally regulated plasminogen receptor, Plg-RKT, a major regulator of cell surface plasminogen activation.</title>
        <authorList>
            <person name="Andronicos N.M."/>
            <person name="Chen E.I."/>
            <person name="Baik N."/>
            <person name="Bai H."/>
            <person name="Parmer C.M."/>
            <person name="Kiosses W.B."/>
            <person name="Kamps M.P."/>
            <person name="Yates J.R. III"/>
            <person name="Parmer R.J."/>
            <person name="Miles L.A."/>
        </authorList>
    </citation>
    <scope>FUNCTION</scope>
    <scope>SUBCELLULAR LOCATION</scope>
    <scope>TOPOLOGY</scope>
    <scope>INTERACTION WITH PLAT</scope>
    <scope>MUTAGENESIS OF LYS-147</scope>
</reference>
<reference key="4">
    <citation type="journal article" date="2010" name="Cell">
        <title>A tissue-specific atlas of mouse protein phosphorylation and expression.</title>
        <authorList>
            <person name="Huttlin E.L."/>
            <person name="Jedrychowski M.P."/>
            <person name="Elias J.E."/>
            <person name="Goswami T."/>
            <person name="Rad R."/>
            <person name="Beausoleil S.A."/>
            <person name="Villen J."/>
            <person name="Haas W."/>
            <person name="Sowa M.E."/>
            <person name="Gygi S.P."/>
        </authorList>
    </citation>
    <scope>IDENTIFICATION BY MASS SPECTROMETRY [LARGE SCALE ANALYSIS]</scope>
    <source>
        <tissue>Kidney</tissue>
        <tissue>Lung</tissue>
    </source>
</reference>
<reference key="5">
    <citation type="journal article" date="2011" name="Blood">
        <title>Regulation of macrophage migration by a novel plasminogen receptor Plg-R KT.</title>
        <authorList>
            <person name="Lighvani S."/>
            <person name="Baik N."/>
            <person name="Diggs J.E."/>
            <person name="Khaldoyanidi S."/>
            <person name="Parmer R.J."/>
            <person name="Miles L.A."/>
        </authorList>
    </citation>
    <scope>FUNCTION IN INFLAMMATORY RESPONSE</scope>
</reference>
<reference key="6">
    <citation type="journal article" date="2011" name="J. Biol. Chem.">
        <title>The novel plasminogen receptor, plasminogen receptor(KT) (Plg-R(KT)), regulates catecholamine release.</title>
        <authorList>
            <person name="Bai H."/>
            <person name="Baik N."/>
            <person name="Kiosses W.B."/>
            <person name="Krajewski S."/>
            <person name="Miles L.A."/>
            <person name="Parmer R.J."/>
        </authorList>
    </citation>
    <scope>FUNCTION IN NEUROENDOCRINE PROHORMONE PROCESSING</scope>
    <scope>TISSUE SPECIFICITY</scope>
    <scope>SUBCELLULAR LOCATION</scope>
</reference>